<evidence type="ECO:0000255" key="1">
    <source>
        <dbReference type="HAMAP-Rule" id="MF_01659"/>
    </source>
</evidence>
<protein>
    <recommendedName>
        <fullName evidence="1">2-succinyl-5-enolpyruvyl-6-hydroxy-3-cyclohexene-1-carboxylate synthase</fullName>
        <shortName evidence="1">SEPHCHC synthase</shortName>
        <ecNumber evidence="1">2.2.1.9</ecNumber>
    </recommendedName>
    <alternativeName>
        <fullName evidence="1">Menaquinone biosynthesis protein MenD</fullName>
    </alternativeName>
</protein>
<dbReference type="EC" id="2.2.1.9" evidence="1"/>
<dbReference type="EMBL" id="AE017143">
    <property type="protein sequence ID" value="AAP96594.1"/>
    <property type="molecule type" value="Genomic_DNA"/>
</dbReference>
<dbReference type="RefSeq" id="WP_010945623.1">
    <property type="nucleotide sequence ID" value="NC_002940.2"/>
</dbReference>
<dbReference type="SMR" id="Q7VKM9"/>
<dbReference type="STRING" id="233412.HD_1853"/>
<dbReference type="KEGG" id="hdu:HD_1853"/>
<dbReference type="eggNOG" id="COG1165">
    <property type="taxonomic scope" value="Bacteria"/>
</dbReference>
<dbReference type="HOGENOM" id="CLU_006051_3_0_6"/>
<dbReference type="OrthoDB" id="9791859at2"/>
<dbReference type="UniPathway" id="UPA00079"/>
<dbReference type="UniPathway" id="UPA01057">
    <property type="reaction ID" value="UER00164"/>
</dbReference>
<dbReference type="Proteomes" id="UP000001022">
    <property type="component" value="Chromosome"/>
</dbReference>
<dbReference type="GO" id="GO:0070204">
    <property type="term" value="F:2-succinyl-5-enolpyruvyl-6-hydroxy-3-cyclohexene-1-carboxylic-acid synthase activity"/>
    <property type="evidence" value="ECO:0007669"/>
    <property type="project" value="UniProtKB-UniRule"/>
</dbReference>
<dbReference type="GO" id="GO:0000287">
    <property type="term" value="F:magnesium ion binding"/>
    <property type="evidence" value="ECO:0007669"/>
    <property type="project" value="UniProtKB-UniRule"/>
</dbReference>
<dbReference type="GO" id="GO:0030145">
    <property type="term" value="F:manganese ion binding"/>
    <property type="evidence" value="ECO:0007669"/>
    <property type="project" value="UniProtKB-UniRule"/>
</dbReference>
<dbReference type="GO" id="GO:0030976">
    <property type="term" value="F:thiamine pyrophosphate binding"/>
    <property type="evidence" value="ECO:0007669"/>
    <property type="project" value="UniProtKB-UniRule"/>
</dbReference>
<dbReference type="GO" id="GO:0009234">
    <property type="term" value="P:menaquinone biosynthetic process"/>
    <property type="evidence" value="ECO:0007669"/>
    <property type="project" value="UniProtKB-UniRule"/>
</dbReference>
<dbReference type="CDD" id="cd07037">
    <property type="entry name" value="TPP_PYR_MenD"/>
    <property type="match status" value="1"/>
</dbReference>
<dbReference type="CDD" id="cd02009">
    <property type="entry name" value="TPP_SHCHC_synthase"/>
    <property type="match status" value="1"/>
</dbReference>
<dbReference type="Gene3D" id="3.40.50.970">
    <property type="match status" value="2"/>
</dbReference>
<dbReference type="Gene3D" id="3.40.50.1220">
    <property type="entry name" value="TPP-binding domain"/>
    <property type="match status" value="1"/>
</dbReference>
<dbReference type="HAMAP" id="MF_01659">
    <property type="entry name" value="MenD"/>
    <property type="match status" value="1"/>
</dbReference>
<dbReference type="InterPro" id="IPR004433">
    <property type="entry name" value="MenaQ_synth_MenD"/>
</dbReference>
<dbReference type="InterPro" id="IPR032264">
    <property type="entry name" value="MenD_middle"/>
</dbReference>
<dbReference type="InterPro" id="IPR029061">
    <property type="entry name" value="THDP-binding"/>
</dbReference>
<dbReference type="InterPro" id="IPR012001">
    <property type="entry name" value="Thiamin_PyroP_enz_TPP-bd_dom"/>
</dbReference>
<dbReference type="InterPro" id="IPR011766">
    <property type="entry name" value="TPP_enzyme_TPP-bd"/>
</dbReference>
<dbReference type="NCBIfam" id="TIGR00173">
    <property type="entry name" value="menD"/>
    <property type="match status" value="1"/>
</dbReference>
<dbReference type="PANTHER" id="PTHR42916">
    <property type="entry name" value="2-SUCCINYL-5-ENOLPYRUVYL-6-HYDROXY-3-CYCLOHEXENE-1-CARBOXYLATE SYNTHASE"/>
    <property type="match status" value="1"/>
</dbReference>
<dbReference type="PANTHER" id="PTHR42916:SF1">
    <property type="entry name" value="PROTEIN PHYLLO, CHLOROPLASTIC"/>
    <property type="match status" value="1"/>
</dbReference>
<dbReference type="Pfam" id="PF02775">
    <property type="entry name" value="TPP_enzyme_C"/>
    <property type="match status" value="1"/>
</dbReference>
<dbReference type="Pfam" id="PF16582">
    <property type="entry name" value="TPP_enzyme_M_2"/>
    <property type="match status" value="1"/>
</dbReference>
<dbReference type="Pfam" id="PF02776">
    <property type="entry name" value="TPP_enzyme_N"/>
    <property type="match status" value="1"/>
</dbReference>
<dbReference type="PIRSF" id="PIRSF004983">
    <property type="entry name" value="MenD"/>
    <property type="match status" value="1"/>
</dbReference>
<dbReference type="SUPFAM" id="SSF52518">
    <property type="entry name" value="Thiamin diphosphate-binding fold (THDP-binding)"/>
    <property type="match status" value="2"/>
</dbReference>
<gene>
    <name evidence="1" type="primary">menD</name>
    <name type="ordered locus">HD_1853</name>
</gene>
<feature type="chain" id="PRO_0000341752" description="2-succinyl-5-enolpyruvyl-6-hydroxy-3-cyclohexene-1-carboxylate synthase">
    <location>
        <begin position="1"/>
        <end position="569"/>
    </location>
</feature>
<accession>Q7VKM9</accession>
<comment type="function">
    <text evidence="1">Catalyzes the thiamine diphosphate-dependent decarboxylation of 2-oxoglutarate and the subsequent addition of the resulting succinic semialdehyde-thiamine pyrophosphate anion to isochorismate to yield 2-succinyl-5-enolpyruvyl-6-hydroxy-3-cyclohexene-1-carboxylate (SEPHCHC).</text>
</comment>
<comment type="catalytic activity">
    <reaction evidence="1">
        <text>isochorismate + 2-oxoglutarate + H(+) = 5-enolpyruvoyl-6-hydroxy-2-succinyl-cyclohex-3-ene-1-carboxylate + CO2</text>
        <dbReference type="Rhea" id="RHEA:25593"/>
        <dbReference type="ChEBI" id="CHEBI:15378"/>
        <dbReference type="ChEBI" id="CHEBI:16526"/>
        <dbReference type="ChEBI" id="CHEBI:16810"/>
        <dbReference type="ChEBI" id="CHEBI:29780"/>
        <dbReference type="ChEBI" id="CHEBI:58818"/>
        <dbReference type="EC" id="2.2.1.9"/>
    </reaction>
</comment>
<comment type="cofactor">
    <cofactor evidence="1">
        <name>Mg(2+)</name>
        <dbReference type="ChEBI" id="CHEBI:18420"/>
    </cofactor>
    <cofactor evidence="1">
        <name>Mn(2+)</name>
        <dbReference type="ChEBI" id="CHEBI:29035"/>
    </cofactor>
</comment>
<comment type="cofactor">
    <cofactor evidence="1">
        <name>thiamine diphosphate</name>
        <dbReference type="ChEBI" id="CHEBI:58937"/>
    </cofactor>
    <text evidence="1">Binds 1 thiamine pyrophosphate per subunit.</text>
</comment>
<comment type="pathway">
    <text evidence="1">Quinol/quinone metabolism; 1,4-dihydroxy-2-naphthoate biosynthesis; 1,4-dihydroxy-2-naphthoate from chorismate: step 2/7.</text>
</comment>
<comment type="pathway">
    <text evidence="1">Quinol/quinone metabolism; menaquinone biosynthesis.</text>
</comment>
<comment type="subunit">
    <text evidence="1">Homodimer.</text>
</comment>
<comment type="similarity">
    <text evidence="1">Belongs to the TPP enzyme family. MenD subfamily.</text>
</comment>
<organism>
    <name type="scientific">Haemophilus ducreyi (strain 35000HP / ATCC 700724)</name>
    <dbReference type="NCBI Taxonomy" id="233412"/>
    <lineage>
        <taxon>Bacteria</taxon>
        <taxon>Pseudomonadati</taxon>
        <taxon>Pseudomonadota</taxon>
        <taxon>Gammaproteobacteria</taxon>
        <taxon>Pasteurellales</taxon>
        <taxon>Pasteurellaceae</taxon>
        <taxon>Haemophilus</taxon>
    </lineage>
</organism>
<proteinExistence type="inferred from homology"/>
<reference key="1">
    <citation type="submission" date="2003-06" db="EMBL/GenBank/DDBJ databases">
        <title>The complete genome sequence of Haemophilus ducreyi.</title>
        <authorList>
            <person name="Munson R.S. Jr."/>
            <person name="Ray W.C."/>
            <person name="Mahairas G."/>
            <person name="Sabo P."/>
            <person name="Mungur R."/>
            <person name="Johnson L."/>
            <person name="Nguyen D."/>
            <person name="Wang J."/>
            <person name="Forst C."/>
            <person name="Hood L."/>
        </authorList>
    </citation>
    <scope>NUCLEOTIDE SEQUENCE [LARGE SCALE GENOMIC DNA]</scope>
    <source>
        <strain>35000HP / ATCC 700724</strain>
    </source>
</reference>
<name>MEND_HAEDU</name>
<sequence>MSTNSSFNRSWAKVILNALLRYGVKHFCIAPGSRSTPLTLEALQLQHTQQAECHSHFDERGLAFFALGMAKATNDPVAIIVTSGTAVANLYPALIEASLTQHKLIVLSADRPPELIGCGVNQAITQPGIFADYPIANIHLPKASTDYNASWLAATIEQACVNQQQQGGVIHINAPFAEPLYETDENEINNTPWLKPLQSWLIKPTAKWLNSQSIQSEVSMHENWDYWRTKRGVIIVGKLPVEQGVGIKAWAETLGWCLLTDIQSCVDASLPYADIWLSNNTVHERLLNADIVIQFGSQIISKRVNKYLADFKGEFWQVDEYQRYLNPFAHRQTRFVAKAHHFLRVHPPLRQKPWLLEPLALSQFCASFIEQQVGGSLNEASLAHHIEQVLATNGNLFIGNSLFVRLVDALCKLPEGYPVYTNRGASGIDGLIATMAGIAKASGQPTVGVVGDISALHDLNSISLLSKINHPSILFVINNSGGAIFDMLPVEARVKEQFYRLSHNYEFSQVAAMFGIEYIRPFTWADLKAKLKLAYGRKSATIVEIKVNDQDGSNLYKSLIKQISQAEIA</sequence>
<keyword id="KW-0460">Magnesium</keyword>
<keyword id="KW-0464">Manganese</keyword>
<keyword id="KW-0474">Menaquinone biosynthesis</keyword>
<keyword id="KW-0479">Metal-binding</keyword>
<keyword id="KW-1185">Reference proteome</keyword>
<keyword id="KW-0786">Thiamine pyrophosphate</keyword>
<keyword id="KW-0808">Transferase</keyword>